<proteinExistence type="inferred from homology"/>
<protein>
    <recommendedName>
        <fullName evidence="1">Met repressor</fullName>
    </recommendedName>
    <alternativeName>
        <fullName evidence="1">Met regulon regulatory protein MetJ</fullName>
    </alternativeName>
</protein>
<reference key="1">
    <citation type="journal article" date="2009" name="PLoS Genet.">
        <title>Organised genome dynamics in the Escherichia coli species results in highly diverse adaptive paths.</title>
        <authorList>
            <person name="Touchon M."/>
            <person name="Hoede C."/>
            <person name="Tenaillon O."/>
            <person name="Barbe V."/>
            <person name="Baeriswyl S."/>
            <person name="Bidet P."/>
            <person name="Bingen E."/>
            <person name="Bonacorsi S."/>
            <person name="Bouchier C."/>
            <person name="Bouvet O."/>
            <person name="Calteau A."/>
            <person name="Chiapello H."/>
            <person name="Clermont O."/>
            <person name="Cruveiller S."/>
            <person name="Danchin A."/>
            <person name="Diard M."/>
            <person name="Dossat C."/>
            <person name="Karoui M.E."/>
            <person name="Frapy E."/>
            <person name="Garry L."/>
            <person name="Ghigo J.M."/>
            <person name="Gilles A.M."/>
            <person name="Johnson J."/>
            <person name="Le Bouguenec C."/>
            <person name="Lescat M."/>
            <person name="Mangenot S."/>
            <person name="Martinez-Jehanne V."/>
            <person name="Matic I."/>
            <person name="Nassif X."/>
            <person name="Oztas S."/>
            <person name="Petit M.A."/>
            <person name="Pichon C."/>
            <person name="Rouy Z."/>
            <person name="Ruf C.S."/>
            <person name="Schneider D."/>
            <person name="Tourret J."/>
            <person name="Vacherie B."/>
            <person name="Vallenet D."/>
            <person name="Medigue C."/>
            <person name="Rocha E.P.C."/>
            <person name="Denamur E."/>
        </authorList>
    </citation>
    <scope>NUCLEOTIDE SEQUENCE [LARGE SCALE GENOMIC DNA]</scope>
    <source>
        <strain>ATCC 35469 / DSM 13698 / BCRC 15582 / CCUG 18766 / IAM 14443 / JCM 21226 / LMG 7866 / NBRC 102419 / NCTC 12128 / CDC 0568-73</strain>
    </source>
</reference>
<name>METJ_ESCF3</name>
<organism>
    <name type="scientific">Escherichia fergusonii (strain ATCC 35469 / DSM 13698 / CCUG 18766 / IAM 14443 / JCM 21226 / LMG 7866 / NBRC 102419 / NCTC 12128 / CDC 0568-73)</name>
    <dbReference type="NCBI Taxonomy" id="585054"/>
    <lineage>
        <taxon>Bacteria</taxon>
        <taxon>Pseudomonadati</taxon>
        <taxon>Pseudomonadota</taxon>
        <taxon>Gammaproteobacteria</taxon>
        <taxon>Enterobacterales</taxon>
        <taxon>Enterobacteriaceae</taxon>
        <taxon>Escherichia</taxon>
    </lineage>
</organism>
<sequence>MAEWSGEYISPYAEHGKKSEQVKKITVSIPLKVLKILTDERTRRQVNNLRHATNSELLCEAFLHAFTGQPLPDDADLRKERSDEIPEAAKEIMREMGINPETWEY</sequence>
<dbReference type="EMBL" id="CU928158">
    <property type="protein sequence ID" value="CAQ91268.1"/>
    <property type="molecule type" value="Genomic_DNA"/>
</dbReference>
<dbReference type="RefSeq" id="WP_000852812.1">
    <property type="nucleotide sequence ID" value="NC_011740.1"/>
</dbReference>
<dbReference type="SMR" id="B7LUR5"/>
<dbReference type="GeneID" id="93777954"/>
<dbReference type="KEGG" id="efe:EFER_3833"/>
<dbReference type="HOGENOM" id="CLU_142318_0_0_6"/>
<dbReference type="OrthoDB" id="5680896at2"/>
<dbReference type="Proteomes" id="UP000000745">
    <property type="component" value="Chromosome"/>
</dbReference>
<dbReference type="GO" id="GO:0005737">
    <property type="term" value="C:cytoplasm"/>
    <property type="evidence" value="ECO:0007669"/>
    <property type="project" value="UniProtKB-SubCell"/>
</dbReference>
<dbReference type="GO" id="GO:0003677">
    <property type="term" value="F:DNA binding"/>
    <property type="evidence" value="ECO:0007669"/>
    <property type="project" value="UniProtKB-KW"/>
</dbReference>
<dbReference type="GO" id="GO:0003700">
    <property type="term" value="F:DNA-binding transcription factor activity"/>
    <property type="evidence" value="ECO:0007669"/>
    <property type="project" value="InterPro"/>
</dbReference>
<dbReference type="GO" id="GO:0009086">
    <property type="term" value="P:methionine biosynthetic process"/>
    <property type="evidence" value="ECO:0007669"/>
    <property type="project" value="UniProtKB-UniRule"/>
</dbReference>
<dbReference type="GO" id="GO:0045892">
    <property type="term" value="P:negative regulation of DNA-templated transcription"/>
    <property type="evidence" value="ECO:0007669"/>
    <property type="project" value="UniProtKB-UniRule"/>
</dbReference>
<dbReference type="CDD" id="cd00490">
    <property type="entry name" value="Met_repressor_MetJ"/>
    <property type="match status" value="1"/>
</dbReference>
<dbReference type="FunFam" id="1.10.140.10:FF:000001">
    <property type="entry name" value="Met repressor"/>
    <property type="match status" value="1"/>
</dbReference>
<dbReference type="Gene3D" id="1.10.140.10">
    <property type="entry name" value="MET Apo-Repressor, subunit A"/>
    <property type="match status" value="1"/>
</dbReference>
<dbReference type="HAMAP" id="MF_00744">
    <property type="entry name" value="MetJ"/>
    <property type="match status" value="1"/>
</dbReference>
<dbReference type="InterPro" id="IPR002084">
    <property type="entry name" value="Met_repressor_MetJ"/>
</dbReference>
<dbReference type="InterPro" id="IPR023453">
    <property type="entry name" value="Met_repressor_MetJ_dom_sf"/>
</dbReference>
<dbReference type="InterPro" id="IPR010985">
    <property type="entry name" value="Ribbon_hlx_hlx"/>
</dbReference>
<dbReference type="NCBIfam" id="NF003622">
    <property type="entry name" value="PRK05264.1"/>
    <property type="match status" value="1"/>
</dbReference>
<dbReference type="Pfam" id="PF01340">
    <property type="entry name" value="MetJ"/>
    <property type="match status" value="1"/>
</dbReference>
<dbReference type="SUPFAM" id="SSF47598">
    <property type="entry name" value="Ribbon-helix-helix"/>
    <property type="match status" value="1"/>
</dbReference>
<keyword id="KW-0028">Amino-acid biosynthesis</keyword>
<keyword id="KW-0963">Cytoplasm</keyword>
<keyword id="KW-0238">DNA-binding</keyword>
<keyword id="KW-0486">Methionine biosynthesis</keyword>
<keyword id="KW-0678">Repressor</keyword>
<keyword id="KW-0804">Transcription</keyword>
<keyword id="KW-0805">Transcription regulation</keyword>
<feature type="chain" id="PRO_1000191214" description="Met repressor">
    <location>
        <begin position="1"/>
        <end position="105"/>
    </location>
</feature>
<accession>B7LUR5</accession>
<gene>
    <name evidence="1" type="primary">metJ</name>
    <name type="ordered locus">EFER_3833</name>
</gene>
<evidence type="ECO:0000255" key="1">
    <source>
        <dbReference type="HAMAP-Rule" id="MF_00744"/>
    </source>
</evidence>
<comment type="function">
    <text evidence="1">This regulatory protein, when combined with SAM (S-adenosylmethionine) represses the expression of the methionine regulon and of enzymes involved in SAM synthesis.</text>
</comment>
<comment type="subunit">
    <text evidence="1">Homodimer.</text>
</comment>
<comment type="subcellular location">
    <subcellularLocation>
        <location evidence="1">Cytoplasm</location>
    </subcellularLocation>
</comment>
<comment type="domain">
    <text>Does not bind DNA by a helix-turn-helix motif.</text>
</comment>
<comment type="similarity">
    <text evidence="1">Belongs to the MetJ family.</text>
</comment>